<dbReference type="EMBL" id="CP000821">
    <property type="protein sequence ID" value="ABV38013.1"/>
    <property type="molecule type" value="Genomic_DNA"/>
</dbReference>
<dbReference type="RefSeq" id="WP_012143743.1">
    <property type="nucleotide sequence ID" value="NC_009831.1"/>
</dbReference>
<dbReference type="SMR" id="A8FYU0"/>
<dbReference type="STRING" id="425104.Ssed_3409"/>
<dbReference type="KEGG" id="sse:Ssed_3409"/>
<dbReference type="eggNOG" id="COG0443">
    <property type="taxonomic scope" value="Bacteria"/>
</dbReference>
<dbReference type="HOGENOM" id="CLU_005965_2_1_6"/>
<dbReference type="OrthoDB" id="9766019at2"/>
<dbReference type="Proteomes" id="UP000002015">
    <property type="component" value="Chromosome"/>
</dbReference>
<dbReference type="GO" id="GO:0005524">
    <property type="term" value="F:ATP binding"/>
    <property type="evidence" value="ECO:0007669"/>
    <property type="project" value="UniProtKB-UniRule"/>
</dbReference>
<dbReference type="GO" id="GO:0140662">
    <property type="term" value="F:ATP-dependent protein folding chaperone"/>
    <property type="evidence" value="ECO:0007669"/>
    <property type="project" value="InterPro"/>
</dbReference>
<dbReference type="GO" id="GO:0051082">
    <property type="term" value="F:unfolded protein binding"/>
    <property type="evidence" value="ECO:0007669"/>
    <property type="project" value="InterPro"/>
</dbReference>
<dbReference type="CDD" id="cd10234">
    <property type="entry name" value="ASKHA_NBD_HSP70_DnaK-like"/>
    <property type="match status" value="1"/>
</dbReference>
<dbReference type="FunFam" id="2.60.34.10:FF:000014">
    <property type="entry name" value="Chaperone protein DnaK HSP70"/>
    <property type="match status" value="1"/>
</dbReference>
<dbReference type="FunFam" id="1.20.1270.10:FF:000001">
    <property type="entry name" value="Molecular chaperone DnaK"/>
    <property type="match status" value="1"/>
</dbReference>
<dbReference type="FunFam" id="3.30.420.40:FF:000004">
    <property type="entry name" value="Molecular chaperone DnaK"/>
    <property type="match status" value="1"/>
</dbReference>
<dbReference type="FunFam" id="3.90.640.10:FF:000003">
    <property type="entry name" value="Molecular chaperone DnaK"/>
    <property type="match status" value="1"/>
</dbReference>
<dbReference type="Gene3D" id="1.20.1270.10">
    <property type="match status" value="1"/>
</dbReference>
<dbReference type="Gene3D" id="3.30.420.40">
    <property type="match status" value="2"/>
</dbReference>
<dbReference type="Gene3D" id="3.90.640.10">
    <property type="entry name" value="Actin, Chain A, domain 4"/>
    <property type="match status" value="1"/>
</dbReference>
<dbReference type="Gene3D" id="2.60.34.10">
    <property type="entry name" value="Substrate Binding Domain Of DNAk, Chain A, domain 1"/>
    <property type="match status" value="1"/>
</dbReference>
<dbReference type="HAMAP" id="MF_00332">
    <property type="entry name" value="DnaK"/>
    <property type="match status" value="1"/>
</dbReference>
<dbReference type="InterPro" id="IPR043129">
    <property type="entry name" value="ATPase_NBD"/>
</dbReference>
<dbReference type="InterPro" id="IPR012725">
    <property type="entry name" value="Chaperone_DnaK"/>
</dbReference>
<dbReference type="InterPro" id="IPR018181">
    <property type="entry name" value="Heat_shock_70_CS"/>
</dbReference>
<dbReference type="InterPro" id="IPR029048">
    <property type="entry name" value="HSP70_C_sf"/>
</dbReference>
<dbReference type="InterPro" id="IPR029047">
    <property type="entry name" value="HSP70_peptide-bd_sf"/>
</dbReference>
<dbReference type="InterPro" id="IPR013126">
    <property type="entry name" value="Hsp_70_fam"/>
</dbReference>
<dbReference type="NCBIfam" id="NF001413">
    <property type="entry name" value="PRK00290.1"/>
    <property type="match status" value="1"/>
</dbReference>
<dbReference type="NCBIfam" id="TIGR02350">
    <property type="entry name" value="prok_dnaK"/>
    <property type="match status" value="1"/>
</dbReference>
<dbReference type="PANTHER" id="PTHR19375">
    <property type="entry name" value="HEAT SHOCK PROTEIN 70KDA"/>
    <property type="match status" value="1"/>
</dbReference>
<dbReference type="Pfam" id="PF00012">
    <property type="entry name" value="HSP70"/>
    <property type="match status" value="1"/>
</dbReference>
<dbReference type="PRINTS" id="PR00301">
    <property type="entry name" value="HEATSHOCK70"/>
</dbReference>
<dbReference type="SUPFAM" id="SSF53067">
    <property type="entry name" value="Actin-like ATPase domain"/>
    <property type="match status" value="2"/>
</dbReference>
<dbReference type="SUPFAM" id="SSF100920">
    <property type="entry name" value="Heat shock protein 70kD (HSP70), peptide-binding domain"/>
    <property type="match status" value="1"/>
</dbReference>
<dbReference type="PROSITE" id="PS00297">
    <property type="entry name" value="HSP70_1"/>
    <property type="match status" value="1"/>
</dbReference>
<dbReference type="PROSITE" id="PS00329">
    <property type="entry name" value="HSP70_2"/>
    <property type="match status" value="1"/>
</dbReference>
<dbReference type="PROSITE" id="PS01036">
    <property type="entry name" value="HSP70_3"/>
    <property type="match status" value="1"/>
</dbReference>
<name>DNAK_SHESH</name>
<accession>A8FYU0</accession>
<comment type="function">
    <text evidence="1">Acts as a chaperone.</text>
</comment>
<comment type="induction">
    <text evidence="1">By stress conditions e.g. heat shock.</text>
</comment>
<comment type="similarity">
    <text evidence="1">Belongs to the heat shock protein 70 family.</text>
</comment>
<sequence>MGKIIGIDLGTTNSCVAVLDGDTPRVLENAEGDRTTPSIIAYTGEEILVGQPAKRQAVTNPTNTFFAIKRLIGRRFKDDEVQRDVDIMPFKIIGADNGDAWVEAHGKKMAPPQVSAETLKKMKKTAEDFLGEEVTEAVITVPAYFNDSQRQATKDAGRIAGLEVKRIINEPTAAALAYGIDKKQGDNIVAVYDLGGGTFDISIIEIDSVDGEQTFEVLATNGDTHLGGEDFDNRLINYLADEFKKEQSLDLRNDPLAMQRLKEAAEKAKIELSSASQTEVNLPYITADATGPKHLVVKITRAKLESLVEDLITRTLEPLKVALADADLSVSDINEVILVGGQTRMPKVRTEVSEFFGKELRQDVNPDEAVAIGAAVQAGVLSGDVKDVLLLDVTPLSLGIETMGSVMTKLIEKNTTIPTKASQTFSTADDNQSAVTIHVLQGERKQSSGNKSLGQFNLEGIEAAPRGMPQIEVAFDIDADGILHVSATDKKTGKAQNITIKASSGLSEEEVEAMVRDAEAHADEDAKFEELVTARNQADGMVHATKKQIEEAGEALPSDEKEKIETAMAAVDTAVKGNDKEAIEKSTQELMEASSKLMEIAQAKAQAEQGQQAPEGEAQAAKPDEDVVDAEFEEVKDDKK</sequence>
<organism>
    <name type="scientific">Shewanella sediminis (strain HAW-EB3)</name>
    <dbReference type="NCBI Taxonomy" id="425104"/>
    <lineage>
        <taxon>Bacteria</taxon>
        <taxon>Pseudomonadati</taxon>
        <taxon>Pseudomonadota</taxon>
        <taxon>Gammaproteobacteria</taxon>
        <taxon>Alteromonadales</taxon>
        <taxon>Shewanellaceae</taxon>
        <taxon>Shewanella</taxon>
    </lineage>
</organism>
<gene>
    <name evidence="1" type="primary">dnaK</name>
    <name type="ordered locus">Ssed_3409</name>
</gene>
<keyword id="KW-0067">ATP-binding</keyword>
<keyword id="KW-0143">Chaperone</keyword>
<keyword id="KW-0547">Nucleotide-binding</keyword>
<keyword id="KW-0597">Phosphoprotein</keyword>
<keyword id="KW-1185">Reference proteome</keyword>
<keyword id="KW-0346">Stress response</keyword>
<proteinExistence type="inferred from homology"/>
<reference key="1">
    <citation type="submission" date="2007-08" db="EMBL/GenBank/DDBJ databases">
        <title>Complete sequence of Shewanella sediminis HAW-EB3.</title>
        <authorList>
            <consortium name="US DOE Joint Genome Institute"/>
            <person name="Copeland A."/>
            <person name="Lucas S."/>
            <person name="Lapidus A."/>
            <person name="Barry K."/>
            <person name="Glavina del Rio T."/>
            <person name="Dalin E."/>
            <person name="Tice H."/>
            <person name="Pitluck S."/>
            <person name="Chertkov O."/>
            <person name="Brettin T."/>
            <person name="Bruce D."/>
            <person name="Detter J.C."/>
            <person name="Han C."/>
            <person name="Schmutz J."/>
            <person name="Larimer F."/>
            <person name="Land M."/>
            <person name="Hauser L."/>
            <person name="Kyrpides N."/>
            <person name="Kim E."/>
            <person name="Zhao J.-S."/>
            <person name="Richardson P."/>
        </authorList>
    </citation>
    <scope>NUCLEOTIDE SEQUENCE [LARGE SCALE GENOMIC DNA]</scope>
    <source>
        <strain>HAW-EB3</strain>
    </source>
</reference>
<evidence type="ECO:0000255" key="1">
    <source>
        <dbReference type="HAMAP-Rule" id="MF_00332"/>
    </source>
</evidence>
<evidence type="ECO:0000256" key="2">
    <source>
        <dbReference type="SAM" id="MobiDB-lite"/>
    </source>
</evidence>
<protein>
    <recommendedName>
        <fullName evidence="1">Chaperone protein DnaK</fullName>
    </recommendedName>
    <alternativeName>
        <fullName evidence="1">HSP70</fullName>
    </alternativeName>
    <alternativeName>
        <fullName evidence="1">Heat shock 70 kDa protein</fullName>
    </alternativeName>
    <alternativeName>
        <fullName evidence="1">Heat shock protein 70</fullName>
    </alternativeName>
</protein>
<feature type="chain" id="PRO_1000079247" description="Chaperone protein DnaK">
    <location>
        <begin position="1"/>
        <end position="640"/>
    </location>
</feature>
<feature type="region of interest" description="Disordered" evidence="2">
    <location>
        <begin position="601"/>
        <end position="640"/>
    </location>
</feature>
<feature type="compositionally biased region" description="Low complexity" evidence="2">
    <location>
        <begin position="601"/>
        <end position="621"/>
    </location>
</feature>
<feature type="compositionally biased region" description="Acidic residues" evidence="2">
    <location>
        <begin position="626"/>
        <end position="640"/>
    </location>
</feature>
<feature type="modified residue" description="Phosphothreonine; by autocatalysis" evidence="1">
    <location>
        <position position="198"/>
    </location>
</feature>